<feature type="chain" id="PRO_1000058513" description="Recombination-associated protein RdgC">
    <location>
        <begin position="1"/>
        <end position="303"/>
    </location>
</feature>
<dbReference type="EMBL" id="CP000800">
    <property type="protein sequence ID" value="ABV18020.1"/>
    <property type="molecule type" value="Genomic_DNA"/>
</dbReference>
<dbReference type="RefSeq" id="WP_001298537.1">
    <property type="nucleotide sequence ID" value="NC_009801.1"/>
</dbReference>
<dbReference type="SMR" id="A7ZIE2"/>
<dbReference type="GeneID" id="75202816"/>
<dbReference type="KEGG" id="ecw:EcE24377A_0420"/>
<dbReference type="HOGENOM" id="CLU_052038_1_1_6"/>
<dbReference type="Proteomes" id="UP000001122">
    <property type="component" value="Chromosome"/>
</dbReference>
<dbReference type="GO" id="GO:0043590">
    <property type="term" value="C:bacterial nucleoid"/>
    <property type="evidence" value="ECO:0007669"/>
    <property type="project" value="TreeGrafter"/>
</dbReference>
<dbReference type="GO" id="GO:0005737">
    <property type="term" value="C:cytoplasm"/>
    <property type="evidence" value="ECO:0007669"/>
    <property type="project" value="UniProtKB-UniRule"/>
</dbReference>
<dbReference type="GO" id="GO:0003690">
    <property type="term" value="F:double-stranded DNA binding"/>
    <property type="evidence" value="ECO:0007669"/>
    <property type="project" value="TreeGrafter"/>
</dbReference>
<dbReference type="GO" id="GO:0006310">
    <property type="term" value="P:DNA recombination"/>
    <property type="evidence" value="ECO:0007669"/>
    <property type="project" value="UniProtKB-UniRule"/>
</dbReference>
<dbReference type="GO" id="GO:0000018">
    <property type="term" value="P:regulation of DNA recombination"/>
    <property type="evidence" value="ECO:0007669"/>
    <property type="project" value="TreeGrafter"/>
</dbReference>
<dbReference type="HAMAP" id="MF_00194">
    <property type="entry name" value="RdgC"/>
    <property type="match status" value="1"/>
</dbReference>
<dbReference type="InterPro" id="IPR007476">
    <property type="entry name" value="RdgC"/>
</dbReference>
<dbReference type="NCBIfam" id="NF001460">
    <property type="entry name" value="PRK00321.1-1"/>
    <property type="match status" value="1"/>
</dbReference>
<dbReference type="NCBIfam" id="NF001462">
    <property type="entry name" value="PRK00321.1-3"/>
    <property type="match status" value="1"/>
</dbReference>
<dbReference type="NCBIfam" id="NF001464">
    <property type="entry name" value="PRK00321.1-5"/>
    <property type="match status" value="1"/>
</dbReference>
<dbReference type="PANTHER" id="PTHR38103">
    <property type="entry name" value="RECOMBINATION-ASSOCIATED PROTEIN RDGC"/>
    <property type="match status" value="1"/>
</dbReference>
<dbReference type="PANTHER" id="PTHR38103:SF1">
    <property type="entry name" value="RECOMBINATION-ASSOCIATED PROTEIN RDGC"/>
    <property type="match status" value="1"/>
</dbReference>
<dbReference type="Pfam" id="PF04381">
    <property type="entry name" value="RdgC"/>
    <property type="match status" value="1"/>
</dbReference>
<organism>
    <name type="scientific">Escherichia coli O139:H28 (strain E24377A / ETEC)</name>
    <dbReference type="NCBI Taxonomy" id="331111"/>
    <lineage>
        <taxon>Bacteria</taxon>
        <taxon>Pseudomonadati</taxon>
        <taxon>Pseudomonadota</taxon>
        <taxon>Gammaproteobacteria</taxon>
        <taxon>Enterobacterales</taxon>
        <taxon>Enterobacteriaceae</taxon>
        <taxon>Escherichia</taxon>
    </lineage>
</organism>
<evidence type="ECO:0000255" key="1">
    <source>
        <dbReference type="HAMAP-Rule" id="MF_00194"/>
    </source>
</evidence>
<reference key="1">
    <citation type="journal article" date="2008" name="J. Bacteriol.">
        <title>The pangenome structure of Escherichia coli: comparative genomic analysis of E. coli commensal and pathogenic isolates.</title>
        <authorList>
            <person name="Rasko D.A."/>
            <person name="Rosovitz M.J."/>
            <person name="Myers G.S.A."/>
            <person name="Mongodin E.F."/>
            <person name="Fricke W.F."/>
            <person name="Gajer P."/>
            <person name="Crabtree J."/>
            <person name="Sebaihia M."/>
            <person name="Thomson N.R."/>
            <person name="Chaudhuri R."/>
            <person name="Henderson I.R."/>
            <person name="Sperandio V."/>
            <person name="Ravel J."/>
        </authorList>
    </citation>
    <scope>NUCLEOTIDE SEQUENCE [LARGE SCALE GENOMIC DNA]</scope>
    <source>
        <strain>E24377A / ETEC</strain>
    </source>
</reference>
<sequence length="303" mass="33993">MLWFKNLMVYRLSREISLRAEEMEKQLASMAFTPCGSQDMAKMGWVPPMGSHSDALTHVANGQIVICARKEEKILPSPVIKQALEAKIAKLEAEQARKLKKTEKDSLKDEVLHSLLPRAFSRFSQTMMWIDTVNGLIMVDCASAKKAEDTLALLRKSLGSLPVVPLSMENPIELTLTEWVRSGSAAQGFQLLDEAELKSLLEDGGVIRAKKQDLTSEEITNHIEAGKVVTKLALDWQQRIQFVMCDDGSLKRLKFCDELRDQNEDIDREDFAQRFDADFILMTGELAALIQNLIEGLGGEAQR</sequence>
<protein>
    <recommendedName>
        <fullName evidence="1">Recombination-associated protein RdgC</fullName>
    </recommendedName>
</protein>
<comment type="function">
    <text evidence="1">May be involved in recombination.</text>
</comment>
<comment type="subcellular location">
    <subcellularLocation>
        <location evidence="1">Cytoplasm</location>
        <location evidence="1">Nucleoid</location>
    </subcellularLocation>
</comment>
<comment type="similarity">
    <text evidence="1">Belongs to the RdgC family.</text>
</comment>
<proteinExistence type="inferred from homology"/>
<keyword id="KW-0963">Cytoplasm</keyword>
<keyword id="KW-0233">DNA recombination</keyword>
<keyword id="KW-1185">Reference proteome</keyword>
<gene>
    <name evidence="1" type="primary">rdgC</name>
    <name type="ordered locus">EcE24377A_0420</name>
</gene>
<accession>A7ZIE2</accession>
<name>RDGC_ECO24</name>